<protein>
    <recommendedName>
        <fullName evidence="2">1,4-alpha-glucan-branching enzyme</fullName>
        <ecNumber evidence="2">2.4.1.18</ecNumber>
    </recommendedName>
    <alternativeName>
        <fullName evidence="2">Glycogen-branching enzyme</fullName>
    </alternativeName>
</protein>
<dbReference type="EC" id="2.4.1.18" evidence="2"/>
<dbReference type="EMBL" id="CP003820">
    <property type="protein sequence ID" value="AFR92526.1"/>
    <property type="molecule type" value="Genomic_DNA"/>
</dbReference>
<dbReference type="RefSeq" id="XP_012046689.1">
    <property type="nucleotide sequence ID" value="XM_012191299.1"/>
</dbReference>
<dbReference type="SMR" id="J9VGQ7"/>
<dbReference type="GeneID" id="23884201"/>
<dbReference type="KEGG" id="cng:CNAG_00393"/>
<dbReference type="VEuPathDB" id="FungiDB:CNAG_00393"/>
<dbReference type="HOGENOM" id="CLU_011131_2_2_1"/>
<dbReference type="OrthoDB" id="59at5206"/>
<dbReference type="UniPathway" id="UPA00164"/>
<dbReference type="Proteomes" id="UP000010091">
    <property type="component" value="Chromosome 1"/>
</dbReference>
<dbReference type="GO" id="GO:0005737">
    <property type="term" value="C:cytoplasm"/>
    <property type="evidence" value="ECO:0000250"/>
    <property type="project" value="UniProtKB"/>
</dbReference>
<dbReference type="GO" id="GO:0003844">
    <property type="term" value="F:1,4-alpha-glucan branching enzyme activity"/>
    <property type="evidence" value="ECO:0007669"/>
    <property type="project" value="UniProtKB-EC"/>
</dbReference>
<dbReference type="GO" id="GO:0043169">
    <property type="term" value="F:cation binding"/>
    <property type="evidence" value="ECO:0007669"/>
    <property type="project" value="InterPro"/>
</dbReference>
<dbReference type="GO" id="GO:0004553">
    <property type="term" value="F:hydrolase activity, hydrolyzing O-glycosyl compounds"/>
    <property type="evidence" value="ECO:0007669"/>
    <property type="project" value="InterPro"/>
</dbReference>
<dbReference type="GO" id="GO:0005978">
    <property type="term" value="P:glycogen biosynthetic process"/>
    <property type="evidence" value="ECO:0000315"/>
    <property type="project" value="UniProtKB"/>
</dbReference>
<dbReference type="CDD" id="cd11321">
    <property type="entry name" value="AmyAc_bac_euk_BE"/>
    <property type="match status" value="1"/>
</dbReference>
<dbReference type="CDD" id="cd02854">
    <property type="entry name" value="E_set_GBE_euk_N"/>
    <property type="match status" value="1"/>
</dbReference>
<dbReference type="FunFam" id="3.20.20.80:FF:000001">
    <property type="entry name" value="1,4-alpha-glucan branching enzyme"/>
    <property type="match status" value="1"/>
</dbReference>
<dbReference type="FunFam" id="2.60.40.10:FF:000250">
    <property type="entry name" value="1,4-alpha-glucan-branching enzyme, chloroplastic/amyloplastic"/>
    <property type="match status" value="1"/>
</dbReference>
<dbReference type="FunFam" id="2.60.40.1180:FF:000003">
    <property type="entry name" value="1,4-alpha-glucan-branching enzyme, chloroplastic/amyloplastic"/>
    <property type="match status" value="1"/>
</dbReference>
<dbReference type="Gene3D" id="3.20.20.80">
    <property type="entry name" value="Glycosidases"/>
    <property type="match status" value="1"/>
</dbReference>
<dbReference type="Gene3D" id="2.60.40.1180">
    <property type="entry name" value="Golgi alpha-mannosidase II"/>
    <property type="match status" value="1"/>
</dbReference>
<dbReference type="Gene3D" id="2.60.40.10">
    <property type="entry name" value="Immunoglobulins"/>
    <property type="match status" value="1"/>
</dbReference>
<dbReference type="InterPro" id="IPR006048">
    <property type="entry name" value="A-amylase/branching_C"/>
</dbReference>
<dbReference type="InterPro" id="IPR037439">
    <property type="entry name" value="Branching_enzy"/>
</dbReference>
<dbReference type="InterPro" id="IPR006047">
    <property type="entry name" value="Glyco_hydro_13_cat_dom"/>
</dbReference>
<dbReference type="InterPro" id="IPR004193">
    <property type="entry name" value="Glyco_hydro_13_N"/>
</dbReference>
<dbReference type="InterPro" id="IPR013780">
    <property type="entry name" value="Glyco_hydro_b"/>
</dbReference>
<dbReference type="InterPro" id="IPR017853">
    <property type="entry name" value="Glycoside_hydrolase_SF"/>
</dbReference>
<dbReference type="InterPro" id="IPR013783">
    <property type="entry name" value="Ig-like_fold"/>
</dbReference>
<dbReference type="InterPro" id="IPR014756">
    <property type="entry name" value="Ig_E-set"/>
</dbReference>
<dbReference type="PANTHER" id="PTHR43651">
    <property type="entry name" value="1,4-ALPHA-GLUCAN-BRANCHING ENZYME"/>
    <property type="match status" value="1"/>
</dbReference>
<dbReference type="PANTHER" id="PTHR43651:SF3">
    <property type="entry name" value="1,4-ALPHA-GLUCAN-BRANCHING ENZYME"/>
    <property type="match status" value="1"/>
</dbReference>
<dbReference type="Pfam" id="PF00128">
    <property type="entry name" value="Alpha-amylase"/>
    <property type="match status" value="1"/>
</dbReference>
<dbReference type="Pfam" id="PF02806">
    <property type="entry name" value="Alpha-amylase_C"/>
    <property type="match status" value="1"/>
</dbReference>
<dbReference type="Pfam" id="PF02922">
    <property type="entry name" value="CBM_48"/>
    <property type="match status" value="1"/>
</dbReference>
<dbReference type="PIRSF" id="PIRSF000463">
    <property type="entry name" value="GlgB"/>
    <property type="match status" value="1"/>
</dbReference>
<dbReference type="SMART" id="SM00642">
    <property type="entry name" value="Aamy"/>
    <property type="match status" value="1"/>
</dbReference>
<dbReference type="SUPFAM" id="SSF51445">
    <property type="entry name" value="(Trans)glycosidases"/>
    <property type="match status" value="1"/>
</dbReference>
<dbReference type="SUPFAM" id="SSF81296">
    <property type="entry name" value="E set domains"/>
    <property type="match status" value="1"/>
</dbReference>
<dbReference type="SUPFAM" id="SSF51011">
    <property type="entry name" value="Glycosyl hydrolase domain"/>
    <property type="match status" value="1"/>
</dbReference>
<sequence>MTAVSLSDGTGVLKTDPWLEPFSGALRERYAAYQKQRTIIEEHEGGLAEFSKGYKSMGFQVDKNGGVRYREWAPNATEARLIGEFNNWSHTANPMTKSPFGVWECYVPPVSPGVCPIPHDSMVKISMTIPGGESIDRIPTWITRVTQDLNISPVYDGRFWNPPKDQQYRFKHGHSTRPVEGLKIYEAHVGISSPNMRVTTYKEFEVDVLPKIKQLGYNCIQMMAIMEHAYYASFGYQVTNFFAASSRFGTPEELKSLVDKAHELGLTVLLDVVHSHASKNILDGINMYDGSDHLYFHEGGRGRHDQWDSRLFNYGHHEVLRFLLSNLRFWMDIYMFDGFRFDGVTSMMYKHHGIGSGFSGGYHEYFGDSVDLEAMVYLMLANAMLHENYPHVVTIAEDVSGMPTLCRPVAEGGVGFDYRLSMAIPDMWIKLLKEYTDDQWEMGHIVHNLTNRRHLEKSVAYAESHDQALVGDKTLAFWLMDKEMYDFMSDLSPLTPIIDRGLALHKMIRFIVHTLGGEAYLNFEGNEFGHPEWMDFPREGNGNSFAHARRQFNLVDDKLLRYKYLYEFDVAMNWLEDKYKWLNSPQAYVSLKHEGDKVIVFERAGLLFIFNFHPTQSFTDYRVGVDTAGEYKVILTSDETRFGGHNRIDMGGRYFTTPMEWNGRKNWLQVYSPSRTVLVLGL</sequence>
<proteinExistence type="inferred from homology"/>
<keyword id="KW-0963">Cytoplasm</keyword>
<keyword id="KW-0320">Glycogen biosynthesis</keyword>
<keyword id="KW-0328">Glycosyltransferase</keyword>
<keyword id="KW-0808">Transferase</keyword>
<comment type="function">
    <text evidence="4">Glycogen-branching enzyme participates in the glycogen biosynthetic process along with glycogenin and glycogen synthase. Generates alpha-1,6-glucosidic branches from alpha-1,4-linked glucose chains, to increase solubility of the glycogen polymer.</text>
</comment>
<comment type="catalytic activity">
    <reaction evidence="2">
        <text>Transfers a segment of a (1-&gt;4)-alpha-D-glucan chain to a primary hydroxy group in a similar glucan chain.</text>
        <dbReference type="EC" id="2.4.1.18"/>
    </reaction>
</comment>
<comment type="pathway">
    <text evidence="2">Glycan biosynthesis; glycogen biosynthesis.</text>
</comment>
<comment type="subcellular location">
    <subcellularLocation>
        <location evidence="1">Cytoplasm</location>
    </subcellularLocation>
    <text evidence="1">Localizes to glycogen granules in the cytoplasm.</text>
</comment>
<comment type="disruption phenotype">
    <text evidence="4">Disrupts production of intracellular glycogen.</text>
</comment>
<comment type="similarity">
    <text evidence="6">Belongs to the glycosyl hydrolase 13 family. GlgB subfamily.</text>
</comment>
<organism evidence="8">
    <name type="scientific">Cryptococcus neoformans var. grubii serotype A (strain H99 / ATCC 208821 / CBS 10515 / FGSC 9487)</name>
    <name type="common">Filobasidiella neoformans var. grubii</name>
    <dbReference type="NCBI Taxonomy" id="235443"/>
    <lineage>
        <taxon>Eukaryota</taxon>
        <taxon>Fungi</taxon>
        <taxon>Dikarya</taxon>
        <taxon>Basidiomycota</taxon>
        <taxon>Agaricomycotina</taxon>
        <taxon>Tremellomycetes</taxon>
        <taxon>Tremellales</taxon>
        <taxon>Cryptococcaceae</taxon>
        <taxon>Cryptococcus</taxon>
        <taxon>Cryptococcus neoformans species complex</taxon>
    </lineage>
</organism>
<name>GLGB_CRYNH</name>
<evidence type="ECO:0000250" key="1">
    <source>
        <dbReference type="UniProtKB" id="P32775"/>
    </source>
</evidence>
<evidence type="ECO:0000250" key="2">
    <source>
        <dbReference type="UniProtKB" id="Q04446"/>
    </source>
</evidence>
<evidence type="ECO:0000250" key="3">
    <source>
        <dbReference type="UniProtKB" id="Q6FJV0"/>
    </source>
</evidence>
<evidence type="ECO:0000269" key="4">
    <source>
    </source>
</evidence>
<evidence type="ECO:0000303" key="5">
    <source>
    </source>
</evidence>
<evidence type="ECO:0000305" key="6"/>
<evidence type="ECO:0000312" key="7">
    <source>
        <dbReference type="EMBL" id="AFR92526.1"/>
    </source>
</evidence>
<evidence type="ECO:0000312" key="8">
    <source>
        <dbReference type="Proteomes" id="UP000010091"/>
    </source>
</evidence>
<accession>J9VGQ7</accession>
<gene>
    <name evidence="5" type="primary">GLC3</name>
    <name evidence="7" type="ORF">CNAG_00393</name>
</gene>
<reference evidence="8" key="1">
    <citation type="journal article" date="2014" name="PLoS Genet.">
        <title>Analysis of the genome and transcriptome of Cryptococcus neoformans var. grubii reveals complex RNA expression and microevolution leading to virulence attenuation.</title>
        <authorList>
            <person name="Janbon G."/>
            <person name="Ormerod K.L."/>
            <person name="Paulet D."/>
            <person name="Byrnes E.J. III"/>
            <person name="Yadav V."/>
            <person name="Chatterjee G."/>
            <person name="Mullapudi N."/>
            <person name="Hon C.-C."/>
            <person name="Billmyre R.B."/>
            <person name="Brunel F."/>
            <person name="Bahn Y.-S."/>
            <person name="Chen W."/>
            <person name="Chen Y."/>
            <person name="Chow E.W.L."/>
            <person name="Coppee J.-Y."/>
            <person name="Floyd-Averette A."/>
            <person name="Gaillardin C."/>
            <person name="Gerik K.J."/>
            <person name="Goldberg J."/>
            <person name="Gonzalez-Hilarion S."/>
            <person name="Gujja S."/>
            <person name="Hamlin J.L."/>
            <person name="Hsueh Y.-P."/>
            <person name="Ianiri G."/>
            <person name="Jones S."/>
            <person name="Kodira C.D."/>
            <person name="Kozubowski L."/>
            <person name="Lam W."/>
            <person name="Marra M."/>
            <person name="Mesner L.D."/>
            <person name="Mieczkowski P.A."/>
            <person name="Moyrand F."/>
            <person name="Nielsen K."/>
            <person name="Proux C."/>
            <person name="Rossignol T."/>
            <person name="Schein J.E."/>
            <person name="Sun S."/>
            <person name="Wollschlaeger C."/>
            <person name="Wood I.A."/>
            <person name="Zeng Q."/>
            <person name="Neuveglise C."/>
            <person name="Newlon C.S."/>
            <person name="Perfect J.R."/>
            <person name="Lodge J.K."/>
            <person name="Idnurm A."/>
            <person name="Stajich J.E."/>
            <person name="Kronstad J.W."/>
            <person name="Sanyal K."/>
            <person name="Heitman J."/>
            <person name="Fraser J.A."/>
            <person name="Cuomo C.A."/>
            <person name="Dietrich F.S."/>
        </authorList>
    </citation>
    <scope>NUCLEOTIDE SEQUENCE [LARGE SCALE GENOMIC DNA]</scope>
    <source>
        <strain>H99 / ATCC 208821 / CBS 10515 / FGSC 9487</strain>
    </source>
</reference>
<reference evidence="6" key="2">
    <citation type="journal article" date="2024" name="Proc. Natl. Acad. Sci. U.S.A.">
        <title>A fungal protein organizes both glycogen and cell wall glucans.</title>
        <authorList>
            <person name="Loza L."/>
            <person name="Doering T.L."/>
        </authorList>
    </citation>
    <scope>FUNCTION</scope>
    <scope>DISRUPTION PHENOTYPE</scope>
    <source>
        <strain evidence="5">KN99</strain>
    </source>
</reference>
<feature type="chain" id="PRO_0000461100" description="1,4-alpha-glucan-branching enzyme">
    <location>
        <begin position="1"/>
        <end position="682"/>
    </location>
</feature>
<feature type="active site" description="Nucleophile" evidence="2">
    <location>
        <position position="342"/>
    </location>
</feature>
<feature type="active site" description="Proton donor" evidence="2">
    <location>
        <position position="397"/>
    </location>
</feature>
<feature type="binding site" evidence="3">
    <location>
        <position position="88"/>
    </location>
    <ligand>
        <name>(1,4-alpha-D-glucosyl)n</name>
        <dbReference type="ChEBI" id="CHEBI:15444"/>
    </ligand>
</feature>
<feature type="binding site" evidence="3">
    <location>
        <position position="124"/>
    </location>
    <ligand>
        <name>(1,4-alpha-D-glucosyl)n</name>
        <dbReference type="ChEBI" id="CHEBI:15444"/>
    </ligand>
</feature>
<feature type="site" description="Transition state stabilizer" evidence="2">
    <location>
        <position position="466"/>
    </location>
</feature>